<protein>
    <recommendedName>
        <fullName evidence="1">Probable RNA 2'-phosphotransferase</fullName>
        <ecNumber evidence="1">2.7.1.-</ecNumber>
    </recommendedName>
</protein>
<organism>
    <name type="scientific">Agrobacterium fabrum (strain C58 / ATCC 33970)</name>
    <name type="common">Agrobacterium tumefaciens (strain C58)</name>
    <dbReference type="NCBI Taxonomy" id="176299"/>
    <lineage>
        <taxon>Bacteria</taxon>
        <taxon>Pseudomonadati</taxon>
        <taxon>Pseudomonadota</taxon>
        <taxon>Alphaproteobacteria</taxon>
        <taxon>Hyphomicrobiales</taxon>
        <taxon>Rhizobiaceae</taxon>
        <taxon>Rhizobium/Agrobacterium group</taxon>
        <taxon>Agrobacterium</taxon>
        <taxon>Agrobacterium tumefaciens complex</taxon>
    </lineage>
</organism>
<comment type="function">
    <text evidence="1">Removes the 2'-phosphate from RNA via an intermediate in which the phosphate is ADP-ribosylated by NAD followed by a presumed transesterification to release the RNA and generate ADP-ribose 1''-2''-cyclic phosphate (APPR&gt;P). May function as an ADP-ribosylase.</text>
</comment>
<comment type="similarity">
    <text evidence="1">Belongs to the KptA/TPT1 family.</text>
</comment>
<dbReference type="EC" id="2.7.1.-" evidence="1"/>
<dbReference type="EMBL" id="AE007870">
    <property type="protein sequence ID" value="AAK89814.1"/>
    <property type="molecule type" value="Genomic_DNA"/>
</dbReference>
<dbReference type="PIR" id="AE2997">
    <property type="entry name" value="AE2997"/>
</dbReference>
<dbReference type="PIR" id="D98286">
    <property type="entry name" value="D98286"/>
</dbReference>
<dbReference type="RefSeq" id="NP_357029.1">
    <property type="nucleotide sequence ID" value="NC_003063.2"/>
</dbReference>
<dbReference type="RefSeq" id="WP_006315587.1">
    <property type="nucleotide sequence ID" value="NC_003063.2"/>
</dbReference>
<dbReference type="SMR" id="Q8U9Z2"/>
<dbReference type="STRING" id="176299.Atu3583"/>
<dbReference type="EnsemblBacteria" id="AAK89814">
    <property type="protein sequence ID" value="AAK89814"/>
    <property type="gene ID" value="Atu3583"/>
</dbReference>
<dbReference type="GeneID" id="1135457"/>
<dbReference type="KEGG" id="atu:Atu3583"/>
<dbReference type="PATRIC" id="fig|176299.10.peg.3428"/>
<dbReference type="eggNOG" id="COG1859">
    <property type="taxonomic scope" value="Bacteria"/>
</dbReference>
<dbReference type="HOGENOM" id="CLU_052998_4_0_5"/>
<dbReference type="OrthoDB" id="4537997at2"/>
<dbReference type="PhylomeDB" id="Q8U9Z2"/>
<dbReference type="BioCyc" id="AGRO:ATU3583-MONOMER"/>
<dbReference type="BRENDA" id="2.7.1.160">
    <property type="organism ID" value="200"/>
</dbReference>
<dbReference type="Proteomes" id="UP000000813">
    <property type="component" value="Chromosome linear"/>
</dbReference>
<dbReference type="GO" id="GO:0003950">
    <property type="term" value="F:NAD+ poly-ADP-ribosyltransferase activity"/>
    <property type="evidence" value="ECO:0007669"/>
    <property type="project" value="InterPro"/>
</dbReference>
<dbReference type="GO" id="GO:0000215">
    <property type="term" value="F:tRNA 2'-phosphotransferase activity"/>
    <property type="evidence" value="ECO:0007669"/>
    <property type="project" value="TreeGrafter"/>
</dbReference>
<dbReference type="GO" id="GO:0006388">
    <property type="term" value="P:tRNA splicing, via endonucleolytic cleavage and ligation"/>
    <property type="evidence" value="ECO:0007669"/>
    <property type="project" value="UniProtKB-UniRule"/>
</dbReference>
<dbReference type="Gene3D" id="3.20.170.30">
    <property type="match status" value="1"/>
</dbReference>
<dbReference type="Gene3D" id="1.10.10.970">
    <property type="entry name" value="RNA 2'-phosphotransferase, Tpt1/KptA family, N-terminal domain"/>
    <property type="match status" value="1"/>
</dbReference>
<dbReference type="HAMAP" id="MF_00299">
    <property type="entry name" value="KptA"/>
    <property type="match status" value="1"/>
</dbReference>
<dbReference type="InterPro" id="IPR002745">
    <property type="entry name" value="Ptrans_KptA/Tpt1"/>
</dbReference>
<dbReference type="InterPro" id="IPR042081">
    <property type="entry name" value="RNA_2'-PTrans_C"/>
</dbReference>
<dbReference type="InterPro" id="IPR022928">
    <property type="entry name" value="RNA_2'-PTrans_KptA"/>
</dbReference>
<dbReference type="InterPro" id="IPR042080">
    <property type="entry name" value="RNA_2'-PTrans_N"/>
</dbReference>
<dbReference type="NCBIfam" id="NF002014">
    <property type="entry name" value="PRK00819.1-4"/>
    <property type="match status" value="1"/>
</dbReference>
<dbReference type="PANTHER" id="PTHR12684">
    <property type="entry name" value="PUTATIVE PHOSPHOTRANSFERASE"/>
    <property type="match status" value="1"/>
</dbReference>
<dbReference type="PANTHER" id="PTHR12684:SF2">
    <property type="entry name" value="TRNA 2'-PHOSPHOTRANSFERASE 1"/>
    <property type="match status" value="1"/>
</dbReference>
<dbReference type="Pfam" id="PF01885">
    <property type="entry name" value="PTS_2-RNA"/>
    <property type="match status" value="1"/>
</dbReference>
<dbReference type="SUPFAM" id="SSF56399">
    <property type="entry name" value="ADP-ribosylation"/>
    <property type="match status" value="1"/>
</dbReference>
<proteinExistence type="inferred from homology"/>
<feature type="chain" id="PRO_0000157477" description="Probable RNA 2'-phosphotransferase">
    <location>
        <begin position="1"/>
        <end position="186"/>
    </location>
</feature>
<sequence length="186" mass="20078">MSTATSKFLSYVLRHAPESIGLVLDSQGWADVADLLAKANASGTPLDEAGLRAVVAESDKKRFTLSEDGRRIRAAQGHSVKVDLGQPPVEPPPQLFHGTATRFLEPILREGLRPGERQQVHLSADRTTALAVGQRHGKPVVLIVDAGQMFADGCRFYLADNGVWLTDAVPFSYLTVSADSSAENDR</sequence>
<reference key="1">
    <citation type="journal article" date="2001" name="Science">
        <title>The genome of the natural genetic engineer Agrobacterium tumefaciens C58.</title>
        <authorList>
            <person name="Wood D.W."/>
            <person name="Setubal J.C."/>
            <person name="Kaul R."/>
            <person name="Monks D.E."/>
            <person name="Kitajima J.P."/>
            <person name="Okura V.K."/>
            <person name="Zhou Y."/>
            <person name="Chen L."/>
            <person name="Wood G.E."/>
            <person name="Almeida N.F. Jr."/>
            <person name="Woo L."/>
            <person name="Chen Y."/>
            <person name="Paulsen I.T."/>
            <person name="Eisen J.A."/>
            <person name="Karp P.D."/>
            <person name="Bovee D. Sr."/>
            <person name="Chapman P."/>
            <person name="Clendenning J."/>
            <person name="Deatherage G."/>
            <person name="Gillet W."/>
            <person name="Grant C."/>
            <person name="Kutyavin T."/>
            <person name="Levy R."/>
            <person name="Li M.-J."/>
            <person name="McClelland E."/>
            <person name="Palmieri A."/>
            <person name="Raymond C."/>
            <person name="Rouse G."/>
            <person name="Saenphimmachak C."/>
            <person name="Wu Z."/>
            <person name="Romero P."/>
            <person name="Gordon D."/>
            <person name="Zhang S."/>
            <person name="Yoo H."/>
            <person name="Tao Y."/>
            <person name="Biddle P."/>
            <person name="Jung M."/>
            <person name="Krespan W."/>
            <person name="Perry M."/>
            <person name="Gordon-Kamm B."/>
            <person name="Liao L."/>
            <person name="Kim S."/>
            <person name="Hendrick C."/>
            <person name="Zhao Z.-Y."/>
            <person name="Dolan M."/>
            <person name="Chumley F."/>
            <person name="Tingey S.V."/>
            <person name="Tomb J.-F."/>
            <person name="Gordon M.P."/>
            <person name="Olson M.V."/>
            <person name="Nester E.W."/>
        </authorList>
    </citation>
    <scope>NUCLEOTIDE SEQUENCE [LARGE SCALE GENOMIC DNA]</scope>
    <source>
        <strain>C58 / ATCC 33970</strain>
    </source>
</reference>
<reference key="2">
    <citation type="journal article" date="2001" name="Science">
        <title>Genome sequence of the plant pathogen and biotechnology agent Agrobacterium tumefaciens C58.</title>
        <authorList>
            <person name="Goodner B."/>
            <person name="Hinkle G."/>
            <person name="Gattung S."/>
            <person name="Miller N."/>
            <person name="Blanchard M."/>
            <person name="Qurollo B."/>
            <person name="Goldman B.S."/>
            <person name="Cao Y."/>
            <person name="Askenazi M."/>
            <person name="Halling C."/>
            <person name="Mullin L."/>
            <person name="Houmiel K."/>
            <person name="Gordon J."/>
            <person name="Vaudin M."/>
            <person name="Iartchouk O."/>
            <person name="Epp A."/>
            <person name="Liu F."/>
            <person name="Wollam C."/>
            <person name="Allinger M."/>
            <person name="Doughty D."/>
            <person name="Scott C."/>
            <person name="Lappas C."/>
            <person name="Markelz B."/>
            <person name="Flanagan C."/>
            <person name="Crowell C."/>
            <person name="Gurson J."/>
            <person name="Lomo C."/>
            <person name="Sear C."/>
            <person name="Strub G."/>
            <person name="Cielo C."/>
            <person name="Slater S."/>
        </authorList>
    </citation>
    <scope>NUCLEOTIDE SEQUENCE [LARGE SCALE GENOMIC DNA]</scope>
    <source>
        <strain>C58 / ATCC 33970</strain>
    </source>
</reference>
<name>KPTA_AGRFC</name>
<gene>
    <name evidence="1" type="primary">kptA</name>
    <name type="ordered locus">Atu3583</name>
    <name type="ORF">AGR_L_2490</name>
</gene>
<accession>Q8U9Z2</accession>
<evidence type="ECO:0000255" key="1">
    <source>
        <dbReference type="HAMAP-Rule" id="MF_00299"/>
    </source>
</evidence>
<keyword id="KW-0520">NAD</keyword>
<keyword id="KW-1185">Reference proteome</keyword>
<keyword id="KW-0808">Transferase</keyword>